<protein>
    <recommendedName>
        <fullName>Protein NRT1/ PTR FAMILY 1.2</fullName>
        <shortName>AtNPF1.2</shortName>
    </recommendedName>
    <alternativeName>
        <fullName>Nitrate transporter 1.11</fullName>
    </alternativeName>
</protein>
<evidence type="ECO:0000255" key="1"/>
<evidence type="ECO:0000269" key="2">
    <source>
    </source>
</evidence>
<evidence type="ECO:0000269" key="3">
    <source>
    </source>
</evidence>
<evidence type="ECO:0000305" key="4"/>
<evidence type="ECO:0007744" key="5">
    <source>
    </source>
</evidence>
<gene>
    <name type="primary">NPF1.2</name>
    <name type="synonym">NRT1.11</name>
    <name type="ordered locus">At1g52190</name>
    <name type="ORF">F9I5.4</name>
</gene>
<sequence length="607" mass="66904">MENPPNETEAKQIQTNEGKKTKGGIITMPFIIANEAFEKVASYGLLPNMIMYLIRDYRFGVAKGTNVLFMWSAASNFTPLLGAFLSDSYLGRFLTISIASLSSFLGMVLLWLTAMLPQVKPSPCDPTAAGSHCGSSTASQLALLYSAFALISIGSGGIRPCSLAFGADQLDNKENPKNERVLESFFGWYYASSAVAVLIAFTGIVYIQEHLGWKIGFGVPAVLMLIAALLFILASPLYVTRGVTKSLFTGLAQAIVAAYKKRKLSLPDHHDSFDCYYHMKDSEIKAPSQKLRFLNKACLISNREEEIGSDGFALNPWRLCTTDKVEELKALIKVIPIWSTGIMMSINTSQSSFQLLQATSMDRRLSRHGSSFQVPAGSFGMFTIIALALWVILYDRAVIPLASKIRGRPFRLSVKLRMGLGLFMSFLAMAISAMVESFRRKKAISQGYANNSNAVVDISAMWLVPQYVLHGLAEALTAIGQTEFFYTEFPKSMSSIAASLFGLGMAVASLLASVVLNAVNELTSRNGKESWVSDNINKGHYNYYYWVLAIMSFINVIYYVICSWSYGPLVDQVRNGRVNGVREEEELIDIVGKGFEKEDLSPVVKTN</sequence>
<keyword id="KW-1003">Cell membrane</keyword>
<keyword id="KW-0472">Membrane</keyword>
<keyword id="KW-0597">Phosphoprotein</keyword>
<keyword id="KW-1185">Reference proteome</keyword>
<keyword id="KW-0812">Transmembrane</keyword>
<keyword id="KW-1133">Transmembrane helix</keyword>
<dbReference type="EMBL" id="AC022354">
    <property type="protein sequence ID" value="AAF29404.1"/>
    <property type="molecule type" value="Genomic_DNA"/>
</dbReference>
<dbReference type="EMBL" id="CP002684">
    <property type="protein sequence ID" value="AEE32766.1"/>
    <property type="molecule type" value="Genomic_DNA"/>
</dbReference>
<dbReference type="EMBL" id="AY084631">
    <property type="protein sequence ID" value="AAM61194.1"/>
    <property type="molecule type" value="mRNA"/>
</dbReference>
<dbReference type="EMBL" id="AY058204">
    <property type="protein sequence ID" value="AAL25616.1"/>
    <property type="status" value="ALT_INIT"/>
    <property type="molecule type" value="mRNA"/>
</dbReference>
<dbReference type="EMBL" id="AY098981">
    <property type="protein sequence ID" value="AAM19991.1"/>
    <property type="molecule type" value="mRNA"/>
</dbReference>
<dbReference type="PIR" id="H96561">
    <property type="entry name" value="H96561"/>
</dbReference>
<dbReference type="RefSeq" id="NP_175630.1">
    <property type="nucleotide sequence ID" value="NM_104099.4"/>
</dbReference>
<dbReference type="SMR" id="Q9M817"/>
<dbReference type="BioGRID" id="26874">
    <property type="interactions" value="4"/>
</dbReference>
<dbReference type="FunCoup" id="Q9M817">
    <property type="interactions" value="216"/>
</dbReference>
<dbReference type="IntAct" id="Q9M817">
    <property type="interactions" value="4"/>
</dbReference>
<dbReference type="STRING" id="3702.Q9M817"/>
<dbReference type="TCDB" id="2.A.17.3.13">
    <property type="family name" value="the proton-dependent oligopeptide transporter (pot/ptr) family"/>
</dbReference>
<dbReference type="GlyGen" id="Q9M817">
    <property type="glycosylation" value="1 site"/>
</dbReference>
<dbReference type="iPTMnet" id="Q9M817"/>
<dbReference type="PaxDb" id="3702-AT1G52190.1"/>
<dbReference type="ProteomicsDB" id="226430"/>
<dbReference type="EnsemblPlants" id="AT1G52190.1">
    <property type="protein sequence ID" value="AT1G52190.1"/>
    <property type="gene ID" value="AT1G52190"/>
</dbReference>
<dbReference type="GeneID" id="841649"/>
<dbReference type="Gramene" id="AT1G52190.1">
    <property type="protein sequence ID" value="AT1G52190.1"/>
    <property type="gene ID" value="AT1G52190"/>
</dbReference>
<dbReference type="KEGG" id="ath:AT1G52190"/>
<dbReference type="Araport" id="AT1G52190"/>
<dbReference type="TAIR" id="AT1G52190">
    <property type="gene designation" value="NPF1.2"/>
</dbReference>
<dbReference type="eggNOG" id="KOG1237">
    <property type="taxonomic scope" value="Eukaryota"/>
</dbReference>
<dbReference type="HOGENOM" id="CLU_009313_4_2_1"/>
<dbReference type="InParanoid" id="Q9M817"/>
<dbReference type="OMA" id="HYNYYYW"/>
<dbReference type="OrthoDB" id="8904098at2759"/>
<dbReference type="PhylomeDB" id="Q9M817"/>
<dbReference type="SABIO-RK" id="Q9M817"/>
<dbReference type="PRO" id="PR:Q9M817"/>
<dbReference type="Proteomes" id="UP000006548">
    <property type="component" value="Chromosome 1"/>
</dbReference>
<dbReference type="ExpressionAtlas" id="Q9M817">
    <property type="expression patterns" value="baseline and differential"/>
</dbReference>
<dbReference type="GO" id="GO:0005634">
    <property type="term" value="C:nucleus"/>
    <property type="evidence" value="ECO:0007005"/>
    <property type="project" value="TAIR"/>
</dbReference>
<dbReference type="GO" id="GO:0005886">
    <property type="term" value="C:plasma membrane"/>
    <property type="evidence" value="ECO:0007669"/>
    <property type="project" value="UniProtKB-SubCell"/>
</dbReference>
<dbReference type="GO" id="GO:0080054">
    <property type="term" value="F:low-affinity nitrate transmembrane transporter activity"/>
    <property type="evidence" value="ECO:0000314"/>
    <property type="project" value="TAIR"/>
</dbReference>
<dbReference type="GO" id="GO:0015706">
    <property type="term" value="P:nitrate transmembrane transport"/>
    <property type="evidence" value="ECO:0000314"/>
    <property type="project" value="TAIR"/>
</dbReference>
<dbReference type="CDD" id="cd17416">
    <property type="entry name" value="MFS_NPF1_2"/>
    <property type="match status" value="1"/>
</dbReference>
<dbReference type="Gene3D" id="1.20.1250.20">
    <property type="entry name" value="MFS general substrate transporter like domains"/>
    <property type="match status" value="1"/>
</dbReference>
<dbReference type="InterPro" id="IPR036259">
    <property type="entry name" value="MFS_trans_sf"/>
</dbReference>
<dbReference type="InterPro" id="IPR000109">
    <property type="entry name" value="POT_fam"/>
</dbReference>
<dbReference type="PANTHER" id="PTHR11654">
    <property type="entry name" value="OLIGOPEPTIDE TRANSPORTER-RELATED"/>
    <property type="match status" value="1"/>
</dbReference>
<dbReference type="Pfam" id="PF00854">
    <property type="entry name" value="PTR2"/>
    <property type="match status" value="1"/>
</dbReference>
<dbReference type="SUPFAM" id="SSF103473">
    <property type="entry name" value="MFS general substrate transporter"/>
    <property type="match status" value="1"/>
</dbReference>
<name>PTR6_ARATH</name>
<feature type="chain" id="PRO_0000324123" description="Protein NRT1/ PTR FAMILY 1.2">
    <location>
        <begin position="1"/>
        <end position="607"/>
    </location>
</feature>
<feature type="transmembrane region" description="Helical" evidence="1">
    <location>
        <begin position="65"/>
        <end position="85"/>
    </location>
</feature>
<feature type="transmembrane region" description="Helical" evidence="1">
    <location>
        <begin position="96"/>
        <end position="116"/>
    </location>
</feature>
<feature type="transmembrane region" description="Helical" evidence="1">
    <location>
        <begin position="138"/>
        <end position="158"/>
    </location>
</feature>
<feature type="transmembrane region" description="Helical" evidence="1">
    <location>
        <begin position="185"/>
        <end position="205"/>
    </location>
</feature>
<feature type="transmembrane region" description="Helical" evidence="1">
    <location>
        <begin position="215"/>
        <end position="235"/>
    </location>
</feature>
<feature type="transmembrane region" description="Helical" evidence="1">
    <location>
        <begin position="374"/>
        <end position="394"/>
    </location>
</feature>
<feature type="transmembrane region" description="Helical" evidence="1">
    <location>
        <begin position="418"/>
        <end position="438"/>
    </location>
</feature>
<feature type="transmembrane region" description="Helical" evidence="1">
    <location>
        <begin position="460"/>
        <end position="480"/>
    </location>
</feature>
<feature type="transmembrane region" description="Helical" evidence="1">
    <location>
        <begin position="496"/>
        <end position="516"/>
    </location>
</feature>
<feature type="transmembrane region" description="Helical" evidence="1">
    <location>
        <begin position="544"/>
        <end position="564"/>
    </location>
</feature>
<feature type="modified residue" description="Phosphoserine" evidence="5">
    <location>
        <position position="601"/>
    </location>
</feature>
<feature type="sequence conflict" description="In Ref. 3; AAM61194." evidence="4" ref="3">
    <original>K</original>
    <variation>M</variation>
    <location>
        <position position="22"/>
    </location>
</feature>
<feature type="sequence conflict" description="In Ref. 3; AAM61194." evidence="4" ref="3">
    <original>T</original>
    <variation>S</variation>
    <location>
        <position position="244"/>
    </location>
</feature>
<feature type="sequence conflict" description="In Ref. 3; AAM61194." evidence="4" ref="3">
    <original>F</original>
    <variation>I</variation>
    <location>
        <position position="273"/>
    </location>
</feature>
<reference key="1">
    <citation type="journal article" date="2000" name="Nature">
        <title>Sequence and analysis of chromosome 1 of the plant Arabidopsis thaliana.</title>
        <authorList>
            <person name="Theologis A."/>
            <person name="Ecker J.R."/>
            <person name="Palm C.J."/>
            <person name="Federspiel N.A."/>
            <person name="Kaul S."/>
            <person name="White O."/>
            <person name="Alonso J."/>
            <person name="Altafi H."/>
            <person name="Araujo R."/>
            <person name="Bowman C.L."/>
            <person name="Brooks S.Y."/>
            <person name="Buehler E."/>
            <person name="Chan A."/>
            <person name="Chao Q."/>
            <person name="Chen H."/>
            <person name="Cheuk R.F."/>
            <person name="Chin C.W."/>
            <person name="Chung M.K."/>
            <person name="Conn L."/>
            <person name="Conway A.B."/>
            <person name="Conway A.R."/>
            <person name="Creasy T.H."/>
            <person name="Dewar K."/>
            <person name="Dunn P."/>
            <person name="Etgu P."/>
            <person name="Feldblyum T.V."/>
            <person name="Feng J.-D."/>
            <person name="Fong B."/>
            <person name="Fujii C.Y."/>
            <person name="Gill J.E."/>
            <person name="Goldsmith A.D."/>
            <person name="Haas B."/>
            <person name="Hansen N.F."/>
            <person name="Hughes B."/>
            <person name="Huizar L."/>
            <person name="Hunter J.L."/>
            <person name="Jenkins J."/>
            <person name="Johnson-Hopson C."/>
            <person name="Khan S."/>
            <person name="Khaykin E."/>
            <person name="Kim C.J."/>
            <person name="Koo H.L."/>
            <person name="Kremenetskaia I."/>
            <person name="Kurtz D.B."/>
            <person name="Kwan A."/>
            <person name="Lam B."/>
            <person name="Langin-Hooper S."/>
            <person name="Lee A."/>
            <person name="Lee J.M."/>
            <person name="Lenz C.A."/>
            <person name="Li J.H."/>
            <person name="Li Y.-P."/>
            <person name="Lin X."/>
            <person name="Liu S.X."/>
            <person name="Liu Z.A."/>
            <person name="Luros J.S."/>
            <person name="Maiti R."/>
            <person name="Marziali A."/>
            <person name="Militscher J."/>
            <person name="Miranda M."/>
            <person name="Nguyen M."/>
            <person name="Nierman W.C."/>
            <person name="Osborne B.I."/>
            <person name="Pai G."/>
            <person name="Peterson J."/>
            <person name="Pham P.K."/>
            <person name="Rizzo M."/>
            <person name="Rooney T."/>
            <person name="Rowley D."/>
            <person name="Sakano H."/>
            <person name="Salzberg S.L."/>
            <person name="Schwartz J.R."/>
            <person name="Shinn P."/>
            <person name="Southwick A.M."/>
            <person name="Sun H."/>
            <person name="Tallon L.J."/>
            <person name="Tambunga G."/>
            <person name="Toriumi M.J."/>
            <person name="Town C.D."/>
            <person name="Utterback T."/>
            <person name="Van Aken S."/>
            <person name="Vaysberg M."/>
            <person name="Vysotskaia V.S."/>
            <person name="Walker M."/>
            <person name="Wu D."/>
            <person name="Yu G."/>
            <person name="Fraser C.M."/>
            <person name="Venter J.C."/>
            <person name="Davis R.W."/>
        </authorList>
    </citation>
    <scope>NUCLEOTIDE SEQUENCE [LARGE SCALE GENOMIC DNA]</scope>
    <source>
        <strain>cv. Columbia</strain>
    </source>
</reference>
<reference key="2">
    <citation type="journal article" date="2017" name="Plant J.">
        <title>Araport11: a complete reannotation of the Arabidopsis thaliana reference genome.</title>
        <authorList>
            <person name="Cheng C.Y."/>
            <person name="Krishnakumar V."/>
            <person name="Chan A.P."/>
            <person name="Thibaud-Nissen F."/>
            <person name="Schobel S."/>
            <person name="Town C.D."/>
        </authorList>
    </citation>
    <scope>GENOME REANNOTATION</scope>
    <source>
        <strain>cv. Columbia</strain>
    </source>
</reference>
<reference key="3">
    <citation type="submission" date="2002-03" db="EMBL/GenBank/DDBJ databases">
        <title>Full-length cDNA from Arabidopsis thaliana.</title>
        <authorList>
            <person name="Brover V.V."/>
            <person name="Troukhan M.E."/>
            <person name="Alexandrov N.A."/>
            <person name="Lu Y.-P."/>
            <person name="Flavell R.B."/>
            <person name="Feldmann K.A."/>
        </authorList>
    </citation>
    <scope>NUCLEOTIDE SEQUENCE [LARGE SCALE MRNA] OF 1-292</scope>
</reference>
<reference key="4">
    <citation type="journal article" date="2003" name="Science">
        <title>Empirical analysis of transcriptional activity in the Arabidopsis genome.</title>
        <authorList>
            <person name="Yamada K."/>
            <person name="Lim J."/>
            <person name="Dale J.M."/>
            <person name="Chen H."/>
            <person name="Shinn P."/>
            <person name="Palm C.J."/>
            <person name="Southwick A.M."/>
            <person name="Wu H.C."/>
            <person name="Kim C.J."/>
            <person name="Nguyen M."/>
            <person name="Pham P.K."/>
            <person name="Cheuk R.F."/>
            <person name="Karlin-Newmann G."/>
            <person name="Liu S.X."/>
            <person name="Lam B."/>
            <person name="Sakano H."/>
            <person name="Wu T."/>
            <person name="Yu G."/>
            <person name="Miranda M."/>
            <person name="Quach H.L."/>
            <person name="Tripp M."/>
            <person name="Chang C.H."/>
            <person name="Lee J.M."/>
            <person name="Toriumi M.J."/>
            <person name="Chan M.M."/>
            <person name="Tang C.C."/>
            <person name="Onodera C.S."/>
            <person name="Deng J.M."/>
            <person name="Akiyama K."/>
            <person name="Ansari Y."/>
            <person name="Arakawa T."/>
            <person name="Banh J."/>
            <person name="Banno F."/>
            <person name="Bowser L."/>
            <person name="Brooks S.Y."/>
            <person name="Carninci P."/>
            <person name="Chao Q."/>
            <person name="Choy N."/>
            <person name="Enju A."/>
            <person name="Goldsmith A.D."/>
            <person name="Gurjal M."/>
            <person name="Hansen N.F."/>
            <person name="Hayashizaki Y."/>
            <person name="Johnson-Hopson C."/>
            <person name="Hsuan V.W."/>
            <person name="Iida K."/>
            <person name="Karnes M."/>
            <person name="Khan S."/>
            <person name="Koesema E."/>
            <person name="Ishida J."/>
            <person name="Jiang P.X."/>
            <person name="Jones T."/>
            <person name="Kawai J."/>
            <person name="Kamiya A."/>
            <person name="Meyers C."/>
            <person name="Nakajima M."/>
            <person name="Narusaka M."/>
            <person name="Seki M."/>
            <person name="Sakurai T."/>
            <person name="Satou M."/>
            <person name="Tamse R."/>
            <person name="Vaysberg M."/>
            <person name="Wallender E.K."/>
            <person name="Wong C."/>
            <person name="Yamamura Y."/>
            <person name="Yuan S."/>
            <person name="Shinozaki K."/>
            <person name="Davis R.W."/>
            <person name="Theologis A."/>
            <person name="Ecker J.R."/>
        </authorList>
    </citation>
    <scope>NUCLEOTIDE SEQUENCE [LARGE SCALE MRNA] OF 284-607</scope>
    <source>
        <strain>cv. Columbia</strain>
    </source>
</reference>
<reference key="5">
    <citation type="journal article" date="2007" name="FEBS Lett.">
        <title>Nitrate transporters and peptide transporters.</title>
        <authorList>
            <person name="Tsay Y.F."/>
            <person name="Chiu C.C."/>
            <person name="Tsai C.B."/>
            <person name="Ho C.H."/>
            <person name="Hsu P.K."/>
        </authorList>
    </citation>
    <scope>TISSUE SPECIFICITY</scope>
    <scope>GENE FAMILY</scope>
</reference>
<reference key="6">
    <citation type="journal article" date="2007" name="Mol. Cell. Proteomics">
        <title>Temporal analysis of sucrose-induced phosphorylation changes in plasma membrane proteins of Arabidopsis.</title>
        <authorList>
            <person name="Niittylae T."/>
            <person name="Fuglsang A.T."/>
            <person name="Palmgren M.G."/>
            <person name="Frommer W.B."/>
            <person name="Schulze W.X."/>
        </authorList>
    </citation>
    <scope>PHOSPHORYLATION [LARGE SCALE ANALYSIS] AT SER-601</scope>
    <scope>IDENTIFICATION BY MASS SPECTROMETRY [LARGE SCALE ANALYSIS]</scope>
    <source>
        <tissue>Seedling</tissue>
    </source>
</reference>
<reference key="7">
    <citation type="journal article" date="2013" name="Plant Physiol.">
        <title>Two phloem nitrate transporters, NRT1.11 and NRT1.12, are important for redistributing xylem-borne nitrate to enhance plant growth.</title>
        <authorList>
            <person name="Hsu P.K."/>
            <person name="Tsay Y.F."/>
        </authorList>
    </citation>
    <scope>FUNCTION</scope>
    <scope>BIOPHYSICOCHEMICAL PROPERTIES</scope>
    <scope>TISSUE SPECIFICITY</scope>
    <scope>SUBCELLULAR LOCATION</scope>
    <scope>DISRUPTION PHENOTYPE</scope>
</reference>
<reference key="8">
    <citation type="journal article" date="2014" name="Trends Plant Sci.">
        <title>A unified nomenclature of NITRATE TRANSPORTER 1/PEPTIDE TRANSPORTER family members in plants.</title>
        <authorList>
            <person name="Leran S."/>
            <person name="Varala K."/>
            <person name="Boyer J.C."/>
            <person name="Chiurazzi M."/>
            <person name="Crawford N."/>
            <person name="Daniel-Vedele F."/>
            <person name="David L."/>
            <person name="Dickstein R."/>
            <person name="Fernandez E."/>
            <person name="Forde B."/>
            <person name="Gassmann W."/>
            <person name="Geiger D."/>
            <person name="Gojon A."/>
            <person name="Gong J.M."/>
            <person name="Halkier B.A."/>
            <person name="Harris J.M."/>
            <person name="Hedrich R."/>
            <person name="Limami A.M."/>
            <person name="Rentsch D."/>
            <person name="Seo M."/>
            <person name="Tsay Y.F."/>
            <person name="Zhang M."/>
            <person name="Coruzzi G."/>
            <person name="Lacombe B."/>
        </authorList>
    </citation>
    <scope>GENE FAMILY</scope>
    <scope>NOMENCLATURE</scope>
</reference>
<accession>Q9M817</accession>
<accession>Q8LFV0</accession>
<accession>Q93Z23</accession>
<comment type="function">
    <text evidence="3">Low-affinity nitrate transporter involved in xylem-to-phloem transfer for redistributing nitrate into developing leaves. Not involved in dipeptides transport.</text>
</comment>
<comment type="biophysicochemical properties">
    <kinetics>
        <KM evidence="3">7.2 mM for nitrate</KM>
    </kinetics>
</comment>
<comment type="subcellular location">
    <subcellularLocation>
        <location evidence="3">Cell membrane</location>
        <topology evidence="3">Multi-pass membrane protein</topology>
    </subcellularLocation>
</comment>
<comment type="tissue specificity">
    <text evidence="2 3">Expressed in shoots, stems, leaves, flowers and siliques. Mainly detected in larger expanded leaves, in the companion cells of major veins.</text>
</comment>
<comment type="disruption phenotype">
    <text evidence="3">Nrt1.11 and nrt1.12 double mutant is defective in high-nitrate-enhanced growth.</text>
</comment>
<comment type="similarity">
    <text evidence="4">Belongs to the major facilitator superfamily. Proton-dependent oligopeptide transporter (POT/PTR) (TC 2.A.17) family.</text>
</comment>
<comment type="sequence caution" evidence="4">
    <conflict type="erroneous initiation">
        <sequence resource="EMBL-CDS" id="AAL25616"/>
    </conflict>
    <text>Truncated N-terminus.</text>
</comment>
<organism>
    <name type="scientific">Arabidopsis thaliana</name>
    <name type="common">Mouse-ear cress</name>
    <dbReference type="NCBI Taxonomy" id="3702"/>
    <lineage>
        <taxon>Eukaryota</taxon>
        <taxon>Viridiplantae</taxon>
        <taxon>Streptophyta</taxon>
        <taxon>Embryophyta</taxon>
        <taxon>Tracheophyta</taxon>
        <taxon>Spermatophyta</taxon>
        <taxon>Magnoliopsida</taxon>
        <taxon>eudicotyledons</taxon>
        <taxon>Gunneridae</taxon>
        <taxon>Pentapetalae</taxon>
        <taxon>rosids</taxon>
        <taxon>malvids</taxon>
        <taxon>Brassicales</taxon>
        <taxon>Brassicaceae</taxon>
        <taxon>Camelineae</taxon>
        <taxon>Arabidopsis</taxon>
    </lineage>
</organism>
<proteinExistence type="evidence at protein level"/>